<proteinExistence type="evidence at transcript level"/>
<comment type="function">
    <text evidence="2">Dihydroxyacetonephosphate acyltransferase catalyzing the first step in the biosynthesis of plasmalogens, a subset of phospholipids that differ from other glycerolipids by having an alkyl chain attached through a vinyl ether linkage at the sn-1 position of the glycerol backbone, and which unique physical properties have an impact on various aspects of cell signaling and membrane biology.</text>
</comment>
<comment type="catalytic activity">
    <reaction evidence="2">
        <text>dihydroxyacetone phosphate + an acyl-CoA = a 1-acylglycerone 3-phosphate + CoA</text>
        <dbReference type="Rhea" id="RHEA:17657"/>
        <dbReference type="ChEBI" id="CHEBI:57287"/>
        <dbReference type="ChEBI" id="CHEBI:57534"/>
        <dbReference type="ChEBI" id="CHEBI:57642"/>
        <dbReference type="ChEBI" id="CHEBI:58342"/>
        <dbReference type="EC" id="2.3.1.42"/>
    </reaction>
    <physiologicalReaction direction="left-to-right" evidence="2">
        <dbReference type="Rhea" id="RHEA:17658"/>
    </physiologicalReaction>
</comment>
<comment type="catalytic activity">
    <reaction evidence="2">
        <text>dihydroxyacetone phosphate + hexadecanoyl-CoA = 1-hexadecanoylglycerone 3-phosphate + CoA</text>
        <dbReference type="Rhea" id="RHEA:40715"/>
        <dbReference type="ChEBI" id="CHEBI:57287"/>
        <dbReference type="ChEBI" id="CHEBI:57379"/>
        <dbReference type="ChEBI" id="CHEBI:57642"/>
        <dbReference type="ChEBI" id="CHEBI:58303"/>
    </reaction>
    <physiologicalReaction direction="left-to-right" evidence="2">
        <dbReference type="Rhea" id="RHEA:40716"/>
    </physiologicalReaction>
</comment>
<comment type="pathway">
    <text evidence="2">Membrane lipid metabolism; glycerophospholipid metabolism.</text>
</comment>
<comment type="subunit">
    <text evidence="1">Part of a heterotrimeric complex composed of GNPAT, AGPS and a modified form of GNPAT.</text>
</comment>
<comment type="subcellular location">
    <subcellularLocation>
        <location evidence="5">Peroxisome membrane</location>
        <topology evidence="5">Peripheral membrane protein</topology>
        <orientation evidence="5">Matrix side</orientation>
    </subcellularLocation>
    <text evidence="5">Exclusively localized to the lumenal side of the peroxisomal membrane.</text>
</comment>
<comment type="domain">
    <text evidence="3">The HXXXXD motif is essential for acyltransferase activity and may constitute the binding site for the phosphate moiety of the glycerol-3-phosphate.</text>
</comment>
<comment type="similarity">
    <text evidence="7">Belongs to the GPAT/DAPAT family.</text>
</comment>
<keyword id="KW-0007">Acetylation</keyword>
<keyword id="KW-0012">Acyltransferase</keyword>
<keyword id="KW-0472">Membrane</keyword>
<keyword id="KW-0576">Peroxisome</keyword>
<keyword id="KW-0597">Phosphoprotein</keyword>
<keyword id="KW-1185">Reference proteome</keyword>
<keyword id="KW-0808">Transferase</keyword>
<organism>
    <name type="scientific">Bos taurus</name>
    <name type="common">Bovine</name>
    <dbReference type="NCBI Taxonomy" id="9913"/>
    <lineage>
        <taxon>Eukaryota</taxon>
        <taxon>Metazoa</taxon>
        <taxon>Chordata</taxon>
        <taxon>Craniata</taxon>
        <taxon>Vertebrata</taxon>
        <taxon>Euteleostomi</taxon>
        <taxon>Mammalia</taxon>
        <taxon>Eutheria</taxon>
        <taxon>Laurasiatheria</taxon>
        <taxon>Artiodactyla</taxon>
        <taxon>Ruminantia</taxon>
        <taxon>Pecora</taxon>
        <taxon>Bovidae</taxon>
        <taxon>Bovinae</taxon>
        <taxon>Bos</taxon>
    </lineage>
</organism>
<feature type="chain" id="PRO_0000325855" description="Dihydroxyacetone phosphate acyltransferase">
    <location>
        <begin position="1"/>
        <end position="680"/>
    </location>
</feature>
<feature type="short sequence motif" description="HXXXXD motif" evidence="3">
    <location>
        <begin position="162"/>
        <end position="167"/>
    </location>
</feature>
<feature type="short sequence motif" description="Microbody targeting signal" evidence="6">
    <location>
        <begin position="678"/>
        <end position="680"/>
    </location>
</feature>
<feature type="modified residue" description="Phosphoserine" evidence="4">
    <location>
        <position position="12"/>
    </location>
</feature>
<feature type="modified residue" description="Phosphoserine" evidence="5">
    <location>
        <position position="17"/>
    </location>
</feature>
<feature type="modified residue" description="N6-acetyllysine" evidence="2">
    <location>
        <position position="643"/>
    </location>
</feature>
<evidence type="ECO:0000250" key="1">
    <source>
        <dbReference type="UniProtKB" id="G1SPE9"/>
    </source>
</evidence>
<evidence type="ECO:0000250" key="2">
    <source>
        <dbReference type="UniProtKB" id="O15228"/>
    </source>
</evidence>
<evidence type="ECO:0000250" key="3">
    <source>
        <dbReference type="UniProtKB" id="P10349"/>
    </source>
</evidence>
<evidence type="ECO:0000250" key="4">
    <source>
        <dbReference type="UniProtKB" id="P98192"/>
    </source>
</evidence>
<evidence type="ECO:0000250" key="5">
    <source>
        <dbReference type="UniProtKB" id="Q9ES71"/>
    </source>
</evidence>
<evidence type="ECO:0000255" key="6"/>
<evidence type="ECO:0000305" key="7"/>
<protein>
    <recommendedName>
        <fullName evidence="2">Dihydroxyacetone phosphate acyltransferase</fullName>
        <ecNumber evidence="2">2.3.1.42</ecNumber>
    </recommendedName>
    <alternativeName>
        <fullName evidence="2">Glycerone-phosphate O-acyltransferase</fullName>
    </alternativeName>
</protein>
<name>GNPAT_BOVIN</name>
<gene>
    <name evidence="2" type="primary">GNPAT</name>
</gene>
<reference key="1">
    <citation type="submission" date="2007-03" db="EMBL/GenBank/DDBJ databases">
        <authorList>
            <consortium name="NIH - Mammalian Gene Collection (MGC) project"/>
        </authorList>
    </citation>
    <scope>NUCLEOTIDE SEQUENCE [LARGE SCALE MRNA]</scope>
    <source>
        <strain>Hereford</strain>
        <tissue>Heart ventricle</tissue>
    </source>
</reference>
<accession>A4IF87</accession>
<dbReference type="EC" id="2.3.1.42" evidence="2"/>
<dbReference type="EMBL" id="BC134455">
    <property type="protein sequence ID" value="AAI34456.1"/>
    <property type="molecule type" value="mRNA"/>
</dbReference>
<dbReference type="RefSeq" id="NP_001096756.1">
    <property type="nucleotide sequence ID" value="NM_001103286.1"/>
</dbReference>
<dbReference type="SMR" id="A4IF87"/>
<dbReference type="FunCoup" id="A4IF87">
    <property type="interactions" value="2282"/>
</dbReference>
<dbReference type="STRING" id="9913.ENSBTAP00000062434"/>
<dbReference type="PaxDb" id="9913-ENSBTAP00000014266"/>
<dbReference type="GeneID" id="538800"/>
<dbReference type="KEGG" id="bta:538800"/>
<dbReference type="CTD" id="8443"/>
<dbReference type="eggNOG" id="KOG3730">
    <property type="taxonomic scope" value="Eukaryota"/>
</dbReference>
<dbReference type="InParanoid" id="A4IF87"/>
<dbReference type="OrthoDB" id="10255570at2759"/>
<dbReference type="UniPathway" id="UPA00940"/>
<dbReference type="Proteomes" id="UP000009136">
    <property type="component" value="Unplaced"/>
</dbReference>
<dbReference type="GO" id="GO:0005778">
    <property type="term" value="C:peroxisomal membrane"/>
    <property type="evidence" value="ECO:0000318"/>
    <property type="project" value="GO_Central"/>
</dbReference>
<dbReference type="GO" id="GO:0016287">
    <property type="term" value="F:glycerone-phosphate O-acyltransferase activity"/>
    <property type="evidence" value="ECO:0000318"/>
    <property type="project" value="GO_Central"/>
</dbReference>
<dbReference type="GO" id="GO:0008611">
    <property type="term" value="P:ether lipid biosynthetic process"/>
    <property type="evidence" value="ECO:0000318"/>
    <property type="project" value="GO_Central"/>
</dbReference>
<dbReference type="GO" id="GO:0006650">
    <property type="term" value="P:glycerophospholipid metabolic process"/>
    <property type="evidence" value="ECO:0007669"/>
    <property type="project" value="UniProtKB-UniPathway"/>
</dbReference>
<dbReference type="CDD" id="cd07993">
    <property type="entry name" value="LPLAT_DHAPAT-like"/>
    <property type="match status" value="1"/>
</dbReference>
<dbReference type="InterPro" id="IPR028353">
    <property type="entry name" value="DHAPAT"/>
</dbReference>
<dbReference type="InterPro" id="IPR022284">
    <property type="entry name" value="GPAT/DHAPAT"/>
</dbReference>
<dbReference type="InterPro" id="IPR045520">
    <property type="entry name" value="GPAT/DHAPAT_C"/>
</dbReference>
<dbReference type="InterPro" id="IPR041728">
    <property type="entry name" value="GPAT/DHAPAT_LPLAT"/>
</dbReference>
<dbReference type="InterPro" id="IPR002123">
    <property type="entry name" value="Plipid/glycerol_acylTrfase"/>
</dbReference>
<dbReference type="PANTHER" id="PTHR12563:SF17">
    <property type="entry name" value="DIHYDROXYACETONE PHOSPHATE ACYLTRANSFERASE"/>
    <property type="match status" value="1"/>
</dbReference>
<dbReference type="PANTHER" id="PTHR12563">
    <property type="entry name" value="GLYCEROL-3-PHOSPHATE ACYLTRANSFERASE"/>
    <property type="match status" value="1"/>
</dbReference>
<dbReference type="Pfam" id="PF01553">
    <property type="entry name" value="Acyltransferase"/>
    <property type="match status" value="1"/>
</dbReference>
<dbReference type="Pfam" id="PF19277">
    <property type="entry name" value="GPAT_C"/>
    <property type="match status" value="1"/>
</dbReference>
<dbReference type="PIRSF" id="PIRSF500063">
    <property type="entry name" value="DHAPAT"/>
    <property type="match status" value="1"/>
</dbReference>
<dbReference type="PIRSF" id="PIRSF000437">
    <property type="entry name" value="GPAT_DHAPAT"/>
    <property type="match status" value="1"/>
</dbReference>
<dbReference type="SMART" id="SM00563">
    <property type="entry name" value="PlsC"/>
    <property type="match status" value="1"/>
</dbReference>
<dbReference type="SUPFAM" id="SSF69593">
    <property type="entry name" value="Glycerol-3-phosphate (1)-acyltransferase"/>
    <property type="match status" value="1"/>
</dbReference>
<sequence>MDHSSSSNSCFSVGSTSPGAVVLLYSKELKKWDEFEDVLEERRHVSDLKFAMKCYTPLVYKGITPCKPSDIKCSVLNSEEIHYVIKQLSKESLQPVEVLREEACEILDEMSHKLRLGAIRFFAFALSKIFKQIFSKVRVNEEGIQKLQRAIQEHPVVLLPSHRSYIDFLMLSFLLYNYDLPVPVIAAGMDFLGMKMVGELLRMSGAFFMRRTFGGNKLYWAVFSEYVKTMLRNGYAPVEFFLEGTRSRSAKTLTPKFGLLNIVMEPFFKREVFDTYLVPISISYDRILEETLYAYELLGVPKPKESTTGLLKARRILSEKFGNIHVYFGDPVSLRSLAAGRMGRSPYNLVPRYIPQKQSEEMHTFVTEVAYKMQLLQIQNLVLSPWPLIVAVLLQNRPSIDFDALLEKTLWLKGLTQAFGGFLTWPDNEPAEAVIQSSILLHSNIVSLVKDRVILKMECGDSELVDGLIFQHITLLMCLAYRNQLLNVFVRPSLVAMALQMTPGFRKEDVYSCFRFLCSVFSDEFIFLPGNALKDFEEGCYLLCKSEAIQVMTRDILVTEKGNSVLEFLIGLFKPFVESYQIICKYLLNEEEDYFTEKQYFIRVRKFTSQLLDQGASQCYDVLSSDVQKNALAAFVRLGVVEKKKVNNDYIFNVNEPATTKLEEMLGCKTPVGKPATAKL</sequence>